<keyword id="KW-0687">Ribonucleoprotein</keyword>
<keyword id="KW-0689">Ribosomal protein</keyword>
<keyword id="KW-0694">RNA-binding</keyword>
<keyword id="KW-0699">rRNA-binding</keyword>
<gene>
    <name evidence="1" type="primary">rplY</name>
    <name evidence="1" type="synonym">ctc</name>
    <name type="ordered locus">BRE_795</name>
</gene>
<feature type="chain" id="PRO_1000142493" description="Large ribosomal subunit protein bL25">
    <location>
        <begin position="1"/>
        <end position="182"/>
    </location>
</feature>
<accession>B5RQC3</accession>
<proteinExistence type="inferred from homology"/>
<evidence type="ECO:0000255" key="1">
    <source>
        <dbReference type="HAMAP-Rule" id="MF_01334"/>
    </source>
</evidence>
<evidence type="ECO:0000305" key="2"/>
<sequence length="182" mass="20581">MYSSRILKYEGRSKFGSSCARILRAKSEIPAVVYGKESDVLHIKINSNEFDKKFAKFTDNTVLLLNDGMVEKCVFIKDVSENLTKKFIYHIDFYEVDRTREIERDISIKFIGASVGVKEGGTLSVLRNTVKVKALPLNLPEFVEVDLTPVKKGDQITLKDIVLSDNVKLSETDENLAVLFVK</sequence>
<dbReference type="EMBL" id="CP000993">
    <property type="protein sequence ID" value="ACH95007.1"/>
    <property type="molecule type" value="Genomic_DNA"/>
</dbReference>
<dbReference type="RefSeq" id="WP_012538523.1">
    <property type="nucleotide sequence ID" value="NZ_CP169983.1"/>
</dbReference>
<dbReference type="SMR" id="B5RQC3"/>
<dbReference type="KEGG" id="bre:BRE_795"/>
<dbReference type="HOGENOM" id="CLU_075939_2_0_12"/>
<dbReference type="Proteomes" id="UP000000612">
    <property type="component" value="Chromosome"/>
</dbReference>
<dbReference type="GO" id="GO:0022625">
    <property type="term" value="C:cytosolic large ribosomal subunit"/>
    <property type="evidence" value="ECO:0007669"/>
    <property type="project" value="TreeGrafter"/>
</dbReference>
<dbReference type="GO" id="GO:0008097">
    <property type="term" value="F:5S rRNA binding"/>
    <property type="evidence" value="ECO:0007669"/>
    <property type="project" value="InterPro"/>
</dbReference>
<dbReference type="GO" id="GO:0003735">
    <property type="term" value="F:structural constituent of ribosome"/>
    <property type="evidence" value="ECO:0007669"/>
    <property type="project" value="InterPro"/>
</dbReference>
<dbReference type="GO" id="GO:0006412">
    <property type="term" value="P:translation"/>
    <property type="evidence" value="ECO:0007669"/>
    <property type="project" value="UniProtKB-UniRule"/>
</dbReference>
<dbReference type="CDD" id="cd00495">
    <property type="entry name" value="Ribosomal_L25_TL5_CTC"/>
    <property type="match status" value="1"/>
</dbReference>
<dbReference type="Gene3D" id="2.170.120.20">
    <property type="entry name" value="Ribosomal protein L25, beta domain"/>
    <property type="match status" value="1"/>
</dbReference>
<dbReference type="Gene3D" id="2.40.240.10">
    <property type="entry name" value="Ribosomal Protein L25, Chain P"/>
    <property type="match status" value="1"/>
</dbReference>
<dbReference type="HAMAP" id="MF_01334">
    <property type="entry name" value="Ribosomal_bL25_CTC"/>
    <property type="match status" value="1"/>
</dbReference>
<dbReference type="InterPro" id="IPR020056">
    <property type="entry name" value="Rbsml_bL25/Gln-tRNA_synth_N"/>
</dbReference>
<dbReference type="InterPro" id="IPR011035">
    <property type="entry name" value="Ribosomal_bL25/Gln-tRNA_synth"/>
</dbReference>
<dbReference type="InterPro" id="IPR020057">
    <property type="entry name" value="Ribosomal_bL25_b-dom"/>
</dbReference>
<dbReference type="InterPro" id="IPR037121">
    <property type="entry name" value="Ribosomal_bL25_C"/>
</dbReference>
<dbReference type="InterPro" id="IPR001021">
    <property type="entry name" value="Ribosomal_bL25_long"/>
</dbReference>
<dbReference type="InterPro" id="IPR029751">
    <property type="entry name" value="Ribosomal_L25_dom"/>
</dbReference>
<dbReference type="InterPro" id="IPR020930">
    <property type="entry name" value="Ribosomal_uL5_bac-type"/>
</dbReference>
<dbReference type="NCBIfam" id="TIGR00731">
    <property type="entry name" value="bL25_bact_ctc"/>
    <property type="match status" value="1"/>
</dbReference>
<dbReference type="NCBIfam" id="NF004135">
    <property type="entry name" value="PRK05618.3-1"/>
    <property type="match status" value="1"/>
</dbReference>
<dbReference type="PANTHER" id="PTHR33284">
    <property type="entry name" value="RIBOSOMAL PROTEIN L25/GLN-TRNA SYNTHETASE, ANTI-CODON-BINDING DOMAIN-CONTAINING PROTEIN"/>
    <property type="match status" value="1"/>
</dbReference>
<dbReference type="PANTHER" id="PTHR33284:SF1">
    <property type="entry name" value="RIBOSOMAL PROTEIN L25_GLN-TRNA SYNTHETASE, ANTI-CODON-BINDING DOMAIN-CONTAINING PROTEIN"/>
    <property type="match status" value="1"/>
</dbReference>
<dbReference type="Pfam" id="PF01386">
    <property type="entry name" value="Ribosomal_L25p"/>
    <property type="match status" value="1"/>
</dbReference>
<dbReference type="Pfam" id="PF14693">
    <property type="entry name" value="Ribosomal_TL5_C"/>
    <property type="match status" value="1"/>
</dbReference>
<dbReference type="SUPFAM" id="SSF50715">
    <property type="entry name" value="Ribosomal protein L25-like"/>
    <property type="match status" value="1"/>
</dbReference>
<organism>
    <name type="scientific">Borrelia recurrentis (strain A1)</name>
    <dbReference type="NCBI Taxonomy" id="412418"/>
    <lineage>
        <taxon>Bacteria</taxon>
        <taxon>Pseudomonadati</taxon>
        <taxon>Spirochaetota</taxon>
        <taxon>Spirochaetia</taxon>
        <taxon>Spirochaetales</taxon>
        <taxon>Borreliaceae</taxon>
        <taxon>Borrelia</taxon>
    </lineage>
</organism>
<reference key="1">
    <citation type="journal article" date="2008" name="PLoS Genet.">
        <title>The genome of Borrelia recurrentis, the agent of deadly louse-borne relapsing fever, is a degraded subset of tick-borne Borrelia duttonii.</title>
        <authorList>
            <person name="Lescot M."/>
            <person name="Audic S."/>
            <person name="Robert C."/>
            <person name="Nguyen T.T."/>
            <person name="Blanc G."/>
            <person name="Cutler S.J."/>
            <person name="Wincker P."/>
            <person name="Couloux A."/>
            <person name="Claverie J.-M."/>
            <person name="Raoult D."/>
            <person name="Drancourt M."/>
        </authorList>
    </citation>
    <scope>NUCLEOTIDE SEQUENCE [LARGE SCALE GENOMIC DNA]</scope>
    <source>
        <strain>A1</strain>
    </source>
</reference>
<name>RL25_BORRA</name>
<comment type="function">
    <text evidence="1">This is one of the proteins that binds to the 5S RNA in the ribosome where it forms part of the central protuberance.</text>
</comment>
<comment type="subunit">
    <text evidence="1">Part of the 50S ribosomal subunit; part of the 5S rRNA/L5/L18/L25 subcomplex. Contacts the 5S rRNA. Binds to the 5S rRNA independently of L5 and L18.</text>
</comment>
<comment type="similarity">
    <text evidence="1">Belongs to the bacterial ribosomal protein bL25 family. CTC subfamily.</text>
</comment>
<protein>
    <recommendedName>
        <fullName evidence="1">Large ribosomal subunit protein bL25</fullName>
    </recommendedName>
    <alternativeName>
        <fullName evidence="2">50S ribosomal protein L25</fullName>
    </alternativeName>
    <alternativeName>
        <fullName evidence="1">General stress protein CTC</fullName>
    </alternativeName>
</protein>